<name>Y507_STAES</name>
<organism>
    <name type="scientific">Staphylococcus epidermidis (strain ATCC 12228 / FDA PCI 1200)</name>
    <dbReference type="NCBI Taxonomy" id="176280"/>
    <lineage>
        <taxon>Bacteria</taxon>
        <taxon>Bacillati</taxon>
        <taxon>Bacillota</taxon>
        <taxon>Bacilli</taxon>
        <taxon>Bacillales</taxon>
        <taxon>Staphylococcaceae</taxon>
        <taxon>Staphylococcus</taxon>
    </lineage>
</organism>
<comment type="function">
    <text evidence="1">May catalyze the ATP-dependent phosphorylation of lipids other than diacylglycerol (DAG).</text>
</comment>
<comment type="cofactor">
    <cofactor evidence="1">
        <name>Mg(2+)</name>
        <dbReference type="ChEBI" id="CHEBI:18420"/>
    </cofactor>
    <text evidence="1">Binds 1 Mg(2+) ion per subunit. This ion appears to have a structural role and is required for catalytic activity.</text>
</comment>
<comment type="similarity">
    <text evidence="3">Belongs to the diacylglycerol/lipid kinase family.</text>
</comment>
<accession>Q8CQ05</accession>
<proteinExistence type="inferred from homology"/>
<sequence>MKQPYNHGVLFYHEHSGLKDIHNGIGEVAKSLSSMCKHLSLQLSENKGDIIKYCKSIKNENYSSDVDVLFILGGDGTLNELVNGVMQYQLNLPIGVIPGGTFNDFTKTLQLHPNFKTASEQLLTSHAESYDVLKVNDLYVLNFVGLGLIVQNAENVQDGSKDIFGKFSYIRSTVKTLLNPVKFDFSLTVDGETKEGNTSMMLIANGPNIGGGQIPLTDLSPQDGRANTFVFNDQTLNILNDILKKRDSMNWNEITQGIDHISGKHITLSTNPSMKVDIDGEINLETPIEIQVLPKAIQLLTATEQNN</sequence>
<dbReference type="EC" id="2.7.1.-"/>
<dbReference type="EMBL" id="AE015929">
    <property type="protein sequence ID" value="AAO04104.1"/>
    <property type="molecule type" value="Genomic_DNA"/>
</dbReference>
<dbReference type="RefSeq" id="NP_764062.1">
    <property type="nucleotide sequence ID" value="NC_004461.1"/>
</dbReference>
<dbReference type="RefSeq" id="WP_002468862.1">
    <property type="nucleotide sequence ID" value="NZ_WBME01000015.1"/>
</dbReference>
<dbReference type="SMR" id="Q8CQ05"/>
<dbReference type="KEGG" id="sep:SE_0507"/>
<dbReference type="PATRIC" id="fig|176280.10.peg.479"/>
<dbReference type="eggNOG" id="COG1597">
    <property type="taxonomic scope" value="Bacteria"/>
</dbReference>
<dbReference type="HOGENOM" id="CLU_045532_1_0_9"/>
<dbReference type="OrthoDB" id="142078at2"/>
<dbReference type="Proteomes" id="UP000001411">
    <property type="component" value="Chromosome"/>
</dbReference>
<dbReference type="GO" id="GO:0005886">
    <property type="term" value="C:plasma membrane"/>
    <property type="evidence" value="ECO:0007669"/>
    <property type="project" value="TreeGrafter"/>
</dbReference>
<dbReference type="GO" id="GO:0005524">
    <property type="term" value="F:ATP binding"/>
    <property type="evidence" value="ECO:0007669"/>
    <property type="project" value="UniProtKB-KW"/>
</dbReference>
<dbReference type="GO" id="GO:0004143">
    <property type="term" value="F:ATP-dependent diacylglycerol kinase activity"/>
    <property type="evidence" value="ECO:0007669"/>
    <property type="project" value="TreeGrafter"/>
</dbReference>
<dbReference type="GO" id="GO:0046872">
    <property type="term" value="F:metal ion binding"/>
    <property type="evidence" value="ECO:0007669"/>
    <property type="project" value="UniProtKB-KW"/>
</dbReference>
<dbReference type="GO" id="GO:0008654">
    <property type="term" value="P:phospholipid biosynthetic process"/>
    <property type="evidence" value="ECO:0007669"/>
    <property type="project" value="UniProtKB-KW"/>
</dbReference>
<dbReference type="Gene3D" id="2.60.200.40">
    <property type="match status" value="1"/>
</dbReference>
<dbReference type="Gene3D" id="3.40.50.10330">
    <property type="entry name" value="Probable inorganic polyphosphate/atp-NAD kinase, domain 1"/>
    <property type="match status" value="1"/>
</dbReference>
<dbReference type="InterPro" id="IPR017438">
    <property type="entry name" value="ATP-NAD_kinase_N"/>
</dbReference>
<dbReference type="InterPro" id="IPR005218">
    <property type="entry name" value="Diacylglycerol/lipid_kinase"/>
</dbReference>
<dbReference type="InterPro" id="IPR001206">
    <property type="entry name" value="Diacylglycerol_kinase_cat_dom"/>
</dbReference>
<dbReference type="InterPro" id="IPR050187">
    <property type="entry name" value="Lipid_Phosphate_FormReg"/>
</dbReference>
<dbReference type="InterPro" id="IPR016064">
    <property type="entry name" value="NAD/diacylglycerol_kinase_sf"/>
</dbReference>
<dbReference type="InterPro" id="IPR045540">
    <property type="entry name" value="YegS/DAGK_C"/>
</dbReference>
<dbReference type="NCBIfam" id="TIGR00147">
    <property type="entry name" value="YegS/Rv2252/BmrU family lipid kinase"/>
    <property type="match status" value="1"/>
</dbReference>
<dbReference type="PANTHER" id="PTHR12358:SF106">
    <property type="entry name" value="LIPID KINASE YEGS"/>
    <property type="match status" value="1"/>
</dbReference>
<dbReference type="PANTHER" id="PTHR12358">
    <property type="entry name" value="SPHINGOSINE KINASE"/>
    <property type="match status" value="1"/>
</dbReference>
<dbReference type="Pfam" id="PF00781">
    <property type="entry name" value="DAGK_cat"/>
    <property type="match status" value="1"/>
</dbReference>
<dbReference type="Pfam" id="PF19279">
    <property type="entry name" value="YegS_C"/>
    <property type="match status" value="1"/>
</dbReference>
<dbReference type="SMART" id="SM00046">
    <property type="entry name" value="DAGKc"/>
    <property type="match status" value="1"/>
</dbReference>
<dbReference type="SUPFAM" id="SSF111331">
    <property type="entry name" value="NAD kinase/diacylglycerol kinase-like"/>
    <property type="match status" value="1"/>
</dbReference>
<dbReference type="PROSITE" id="PS50146">
    <property type="entry name" value="DAGK"/>
    <property type="match status" value="1"/>
</dbReference>
<reference key="1">
    <citation type="journal article" date="2003" name="Mol. Microbiol.">
        <title>Genome-based analysis of virulence genes in a non-biofilm-forming Staphylococcus epidermidis strain (ATCC 12228).</title>
        <authorList>
            <person name="Zhang Y.-Q."/>
            <person name="Ren S.-X."/>
            <person name="Li H.-L."/>
            <person name="Wang Y.-X."/>
            <person name="Fu G."/>
            <person name="Yang J."/>
            <person name="Qin Z.-Q."/>
            <person name="Miao Y.-G."/>
            <person name="Wang W.-Y."/>
            <person name="Chen R.-S."/>
            <person name="Shen Y."/>
            <person name="Chen Z."/>
            <person name="Yuan Z.-H."/>
            <person name="Zhao G.-P."/>
            <person name="Qu D."/>
            <person name="Danchin A."/>
            <person name="Wen Y.-M."/>
        </authorList>
    </citation>
    <scope>NUCLEOTIDE SEQUENCE [LARGE SCALE GENOMIC DNA]</scope>
    <source>
        <strain>ATCC 12228 / FDA PCI 1200</strain>
    </source>
</reference>
<evidence type="ECO:0000250" key="1"/>
<evidence type="ECO:0000255" key="2">
    <source>
        <dbReference type="PROSITE-ProRule" id="PRU00783"/>
    </source>
</evidence>
<evidence type="ECO:0000305" key="3"/>
<gene>
    <name type="ordered locus">SE_0507</name>
</gene>
<keyword id="KW-0067">ATP-binding</keyword>
<keyword id="KW-0418">Kinase</keyword>
<keyword id="KW-0444">Lipid biosynthesis</keyword>
<keyword id="KW-0443">Lipid metabolism</keyword>
<keyword id="KW-0460">Magnesium</keyword>
<keyword id="KW-0479">Metal-binding</keyword>
<keyword id="KW-0547">Nucleotide-binding</keyword>
<keyword id="KW-0594">Phospholipid biosynthesis</keyword>
<keyword id="KW-1208">Phospholipid metabolism</keyword>
<keyword id="KW-0808">Transferase</keyword>
<feature type="chain" id="PRO_0000386520" description="Putative lipid kinase SE_0507">
    <location>
        <begin position="1"/>
        <end position="307"/>
    </location>
</feature>
<feature type="domain" description="DAGKc" evidence="2">
    <location>
        <begin position="3"/>
        <end position="139"/>
    </location>
</feature>
<feature type="active site" description="Proton acceptor" evidence="1">
    <location>
        <position position="281"/>
    </location>
</feature>
<feature type="binding site" evidence="2">
    <location>
        <position position="44"/>
    </location>
    <ligand>
        <name>ATP</name>
        <dbReference type="ChEBI" id="CHEBI:30616"/>
    </ligand>
</feature>
<feature type="binding site" evidence="2">
    <location>
        <begin position="74"/>
        <end position="80"/>
    </location>
    <ligand>
        <name>ATP</name>
        <dbReference type="ChEBI" id="CHEBI:30616"/>
    </ligand>
</feature>
<feature type="binding site" evidence="2">
    <location>
        <position position="101"/>
    </location>
    <ligand>
        <name>ATP</name>
        <dbReference type="ChEBI" id="CHEBI:30616"/>
    </ligand>
</feature>
<feature type="binding site" evidence="1">
    <location>
        <position position="220"/>
    </location>
    <ligand>
        <name>Mg(2+)</name>
        <dbReference type="ChEBI" id="CHEBI:18420"/>
    </ligand>
</feature>
<feature type="binding site" evidence="1">
    <location>
        <position position="223"/>
    </location>
    <ligand>
        <name>Mg(2+)</name>
        <dbReference type="ChEBI" id="CHEBI:18420"/>
    </ligand>
</feature>
<feature type="binding site" evidence="1">
    <location>
        <position position="225"/>
    </location>
    <ligand>
        <name>Mg(2+)</name>
        <dbReference type="ChEBI" id="CHEBI:18420"/>
    </ligand>
</feature>
<protein>
    <recommendedName>
        <fullName>Putative lipid kinase SE_0507</fullName>
        <ecNumber>2.7.1.-</ecNumber>
    </recommendedName>
</protein>